<keyword id="KW-1185">Reference proteome</keyword>
<protein>
    <recommendedName>
        <fullName>Nuclear receptor-interacting protein 3</fullName>
    </recommendedName>
</protein>
<reference key="1">
    <citation type="submission" date="2004-11" db="EMBL/GenBank/DDBJ databases">
        <authorList>
            <consortium name="The German cDNA consortium"/>
        </authorList>
    </citation>
    <scope>NUCLEOTIDE SEQUENCE [LARGE SCALE MRNA]</scope>
    <source>
        <tissue>Brain cortex</tissue>
    </source>
</reference>
<sequence length="240" mass="26919">MFYSGLLTEGGRKETDRREAASLRQQRRMKQAVQFIHKDSADLLPLDGLKKLGSSKDTQPHNILQRRLMETNLSKLRSGRVPWASKTNKLNQAKSEGLKKSEEDDMILVSCQCAGRDVKAVVDTGCLHNLISLACVDRLGLKEHVKSHKHEGEKLSLPRHLKVVDQIEHLVITLGSLRLDCPAAVVDDNEKNLSLGLQTLRSLKCIINLDKHRLIMGKTDKEEIPFVETVSLNEDNTSEA</sequence>
<accession>Q5R7G1</accession>
<feature type="chain" id="PRO_0000253599" description="Nuclear receptor-interacting protein 3">
    <location>
        <begin position="1"/>
        <end position="240"/>
    </location>
</feature>
<proteinExistence type="evidence at transcript level"/>
<dbReference type="EMBL" id="CR860156">
    <property type="protein sequence ID" value="CAH92299.1"/>
    <property type="molecule type" value="mRNA"/>
</dbReference>
<dbReference type="SMR" id="Q5R7G1"/>
<dbReference type="FunCoup" id="Q5R7G1">
    <property type="interactions" value="167"/>
</dbReference>
<dbReference type="STRING" id="9601.ENSPPYP00000004014"/>
<dbReference type="eggNOG" id="KOG0012">
    <property type="taxonomic scope" value="Eukaryota"/>
</dbReference>
<dbReference type="InParanoid" id="Q5R7G1"/>
<dbReference type="Proteomes" id="UP000001595">
    <property type="component" value="Unplaced"/>
</dbReference>
<dbReference type="GO" id="GO:0004190">
    <property type="term" value="F:aspartic-type endopeptidase activity"/>
    <property type="evidence" value="ECO:0007669"/>
    <property type="project" value="InterPro"/>
</dbReference>
<dbReference type="GO" id="GO:0006508">
    <property type="term" value="P:proteolysis"/>
    <property type="evidence" value="ECO:0007669"/>
    <property type="project" value="InterPro"/>
</dbReference>
<dbReference type="CDD" id="cd05480">
    <property type="entry name" value="NRIP_C"/>
    <property type="match status" value="1"/>
</dbReference>
<dbReference type="Gene3D" id="2.40.70.10">
    <property type="entry name" value="Acid Proteases"/>
    <property type="match status" value="1"/>
</dbReference>
<dbReference type="InterPro" id="IPR033821">
    <property type="entry name" value="NRIP_C"/>
</dbReference>
<dbReference type="InterPro" id="IPR019103">
    <property type="entry name" value="Peptidase_aspartic_DDI1-type"/>
</dbReference>
<dbReference type="InterPro" id="IPR021109">
    <property type="entry name" value="Peptidase_aspartic_dom_sf"/>
</dbReference>
<dbReference type="PANTHER" id="PTHR12917">
    <property type="entry name" value="ASPARTYL PROTEASE DDI-RELATED"/>
    <property type="match status" value="1"/>
</dbReference>
<dbReference type="PANTHER" id="PTHR12917:SF16">
    <property type="entry name" value="NUCLEAR RECEPTOR-INTERACTING PROTEIN 3"/>
    <property type="match status" value="1"/>
</dbReference>
<dbReference type="Pfam" id="PF09668">
    <property type="entry name" value="Asp_protease"/>
    <property type="match status" value="1"/>
</dbReference>
<dbReference type="SUPFAM" id="SSF50630">
    <property type="entry name" value="Acid proteases"/>
    <property type="match status" value="1"/>
</dbReference>
<organism>
    <name type="scientific">Pongo abelii</name>
    <name type="common">Sumatran orangutan</name>
    <name type="synonym">Pongo pygmaeus abelii</name>
    <dbReference type="NCBI Taxonomy" id="9601"/>
    <lineage>
        <taxon>Eukaryota</taxon>
        <taxon>Metazoa</taxon>
        <taxon>Chordata</taxon>
        <taxon>Craniata</taxon>
        <taxon>Vertebrata</taxon>
        <taxon>Euteleostomi</taxon>
        <taxon>Mammalia</taxon>
        <taxon>Eutheria</taxon>
        <taxon>Euarchontoglires</taxon>
        <taxon>Primates</taxon>
        <taxon>Haplorrhini</taxon>
        <taxon>Catarrhini</taxon>
        <taxon>Hominidae</taxon>
        <taxon>Pongo</taxon>
    </lineage>
</organism>
<gene>
    <name type="primary">NRIP3</name>
</gene>
<name>NRIP3_PONAB</name>